<dbReference type="EMBL" id="FO080169">
    <property type="protein sequence ID" value="CCD61753.1"/>
    <property type="molecule type" value="Genomic_DNA"/>
</dbReference>
<dbReference type="EMBL" id="FO080169">
    <property type="protein sequence ID" value="CCD61754.1"/>
    <property type="molecule type" value="Genomic_DNA"/>
</dbReference>
<dbReference type="PIR" id="T15325">
    <property type="entry name" value="T15325"/>
</dbReference>
<dbReference type="RefSeq" id="NP_001123087.1">
    <molecule id="Q10937-2"/>
    <property type="nucleotide sequence ID" value="NM_001129615.3"/>
</dbReference>
<dbReference type="RefSeq" id="NP_001123088.1">
    <property type="nucleotide sequence ID" value="NM_001129616.3"/>
</dbReference>
<dbReference type="RefSeq" id="NP_001370323.1">
    <molecule id="Q10937-1"/>
    <property type="nucleotide sequence ID" value="NM_001383519.2"/>
</dbReference>
<dbReference type="SMR" id="Q10937"/>
<dbReference type="FunCoup" id="Q10937">
    <property type="interactions" value="58"/>
</dbReference>
<dbReference type="PaxDb" id="6239-B0310.1b"/>
<dbReference type="PeptideAtlas" id="Q10937"/>
<dbReference type="EnsemblMetazoa" id="B0310.1a.1">
    <molecule id="Q10937-2"/>
    <property type="protein sequence ID" value="B0310.1a.1"/>
    <property type="gene ID" value="WBGene00015137"/>
</dbReference>
<dbReference type="EnsemblMetazoa" id="B0310.1b.1">
    <molecule id="Q10937-1"/>
    <property type="protein sequence ID" value="B0310.1b.1"/>
    <property type="gene ID" value="WBGene00015137"/>
</dbReference>
<dbReference type="GeneID" id="181922"/>
<dbReference type="KEGG" id="cel:CELE_B0310.1"/>
<dbReference type="UCSC" id="B0310.1b">
    <molecule id="Q10937-1"/>
    <property type="organism name" value="c. elegans"/>
</dbReference>
<dbReference type="AGR" id="WB:WBGene00015137"/>
<dbReference type="CTD" id="181922"/>
<dbReference type="WormBase" id="B0310.1a">
    <molecule id="Q10937-2"/>
    <property type="protein sequence ID" value="CE41749"/>
    <property type="gene ID" value="WBGene00015137"/>
</dbReference>
<dbReference type="WormBase" id="B0310.1b">
    <molecule id="Q10937-1"/>
    <property type="protein sequence ID" value="CE41750"/>
    <property type="gene ID" value="WBGene00015137"/>
</dbReference>
<dbReference type="eggNOG" id="KOG1418">
    <property type="taxonomic scope" value="Eukaryota"/>
</dbReference>
<dbReference type="HOGENOM" id="CLU_953880_0_0_1"/>
<dbReference type="InParanoid" id="Q10937"/>
<dbReference type="OMA" id="AQSEHEW"/>
<dbReference type="OrthoDB" id="297496at2759"/>
<dbReference type="PhylomeDB" id="Q10937"/>
<dbReference type="Reactome" id="R-CEL-1299503">
    <property type="pathway name" value="TWIK related potassium channel (TREK)"/>
</dbReference>
<dbReference type="Reactome" id="R-CEL-5576886">
    <property type="pathway name" value="Phase 4 - resting membrane potential"/>
</dbReference>
<dbReference type="PRO" id="PR:Q10937"/>
<dbReference type="Proteomes" id="UP000001940">
    <property type="component" value="Chromosome X"/>
</dbReference>
<dbReference type="Bgee" id="WBGene00015137">
    <property type="expression patterns" value="Expressed in larva and 4 other cell types or tissues"/>
</dbReference>
<dbReference type="GO" id="GO:0005886">
    <property type="term" value="C:plasma membrane"/>
    <property type="evidence" value="ECO:0000318"/>
    <property type="project" value="GO_Central"/>
</dbReference>
<dbReference type="GO" id="GO:0015271">
    <property type="term" value="F:outward rectifier potassium channel activity"/>
    <property type="evidence" value="ECO:0000318"/>
    <property type="project" value="GO_Central"/>
</dbReference>
<dbReference type="GO" id="GO:0022841">
    <property type="term" value="F:potassium ion leak channel activity"/>
    <property type="evidence" value="ECO:0000318"/>
    <property type="project" value="GO_Central"/>
</dbReference>
<dbReference type="GO" id="GO:0071805">
    <property type="term" value="P:potassium ion transmembrane transport"/>
    <property type="evidence" value="ECO:0000318"/>
    <property type="project" value="GO_Central"/>
</dbReference>
<dbReference type="FunFam" id="1.10.287.70:FF:000305">
    <property type="entry name" value="Uncharacterized protein B0310.1"/>
    <property type="match status" value="1"/>
</dbReference>
<dbReference type="Gene3D" id="1.10.287.70">
    <property type="match status" value="1"/>
</dbReference>
<dbReference type="InterPro" id="IPR003280">
    <property type="entry name" value="2pore_dom_K_chnl"/>
</dbReference>
<dbReference type="PANTHER" id="PTHR11003">
    <property type="entry name" value="POTASSIUM CHANNEL, SUBFAMILY K"/>
    <property type="match status" value="1"/>
</dbReference>
<dbReference type="PANTHER" id="PTHR11003:SF150">
    <property type="entry name" value="PROTEIN CBG08159"/>
    <property type="match status" value="1"/>
</dbReference>
<dbReference type="SUPFAM" id="SSF81324">
    <property type="entry name" value="Voltage-gated potassium channels"/>
    <property type="match status" value="2"/>
</dbReference>
<name>YWS1_CAEEL</name>
<reference key="1">
    <citation type="journal article" date="1998" name="Science">
        <title>Genome sequence of the nematode C. elegans: a platform for investigating biology.</title>
        <authorList>
            <consortium name="The C. elegans sequencing consortium"/>
        </authorList>
    </citation>
    <scope>NUCLEOTIDE SEQUENCE [LARGE SCALE GENOMIC DNA]</scope>
    <scope>ALTERNATIVE SPLICING</scope>
    <source>
        <strain>Bristol N2</strain>
    </source>
</reference>
<gene>
    <name type="ORF">B0310.1</name>
</gene>
<keyword id="KW-0025">Alternative splicing</keyword>
<keyword id="KW-0472">Membrane</keyword>
<keyword id="KW-1185">Reference proteome</keyword>
<keyword id="KW-0812">Transmembrane</keyword>
<keyword id="KW-1133">Transmembrane helix</keyword>
<accession>Q10937</accession>
<accession>A8WFJ3</accession>
<accession>A8WFJ4</accession>
<sequence>MGADLPPKFQYAFRRCLFYTFVLVAWLFIGMILFPALCTPAVKQDDNEAGIFRLDAKRSDLLNVLWAETITNGEDDWSELADQKLELYEKALLQHYGIDLDKSDKSFASGLQKSFAISTTIGPLDVDDFTTLGKLIAVLYALIGTPLFLTVIGQLGKMVTSVWQGTTLWIVTIVYIFISAVIYDIVEGGSDDVPFIEAIFSIFLQFTTVGEVDNEFHGVLPYCIVVLGLALITALYQEMQHNIERFIHPFEYSFNRLCGNVERWAGEKSEDKKSIVTSRIEEENEDEISDYE</sequence>
<feature type="chain" id="PRO_0000065069" description="Uncharacterized protein B0310.1">
    <location>
        <begin position="1"/>
        <end position="292"/>
    </location>
</feature>
<feature type="transmembrane region" description="Helical" evidence="1">
    <location>
        <begin position="17"/>
        <end position="37"/>
    </location>
</feature>
<feature type="transmembrane region" description="Helical" evidence="1">
    <location>
        <begin position="135"/>
        <end position="155"/>
    </location>
</feature>
<feature type="transmembrane region" description="Helical" evidence="1">
    <location>
        <begin position="166"/>
        <end position="186"/>
    </location>
</feature>
<feature type="transmembrane region" description="Helical" evidence="1">
    <location>
        <begin position="216"/>
        <end position="236"/>
    </location>
</feature>
<feature type="region of interest" description="Disordered" evidence="2">
    <location>
        <begin position="267"/>
        <end position="292"/>
    </location>
</feature>
<feature type="compositionally biased region" description="Acidic residues" evidence="2">
    <location>
        <begin position="282"/>
        <end position="292"/>
    </location>
</feature>
<feature type="splice variant" id="VSP_032730" description="In isoform b." evidence="3">
    <location>
        <begin position="1"/>
        <end position="28"/>
    </location>
</feature>
<feature type="splice variant" id="VSP_032731" description="In isoform b." evidence="3">
    <original>IGMILFPALCTPAVK</original>
    <variation>MRNSACLAKIHFNKI</variation>
    <location>
        <begin position="29"/>
        <end position="43"/>
    </location>
</feature>
<proteinExistence type="predicted"/>
<organism>
    <name type="scientific">Caenorhabditis elegans</name>
    <dbReference type="NCBI Taxonomy" id="6239"/>
    <lineage>
        <taxon>Eukaryota</taxon>
        <taxon>Metazoa</taxon>
        <taxon>Ecdysozoa</taxon>
        <taxon>Nematoda</taxon>
        <taxon>Chromadorea</taxon>
        <taxon>Rhabditida</taxon>
        <taxon>Rhabditina</taxon>
        <taxon>Rhabditomorpha</taxon>
        <taxon>Rhabditoidea</taxon>
        <taxon>Rhabditidae</taxon>
        <taxon>Peloderinae</taxon>
        <taxon>Caenorhabditis</taxon>
    </lineage>
</organism>
<evidence type="ECO:0000255" key="1"/>
<evidence type="ECO:0000256" key="2">
    <source>
        <dbReference type="SAM" id="MobiDB-lite"/>
    </source>
</evidence>
<evidence type="ECO:0000305" key="3"/>
<comment type="subcellular location">
    <subcellularLocation>
        <location evidence="3">Membrane</location>
        <topology evidence="3">Multi-pass membrane protein</topology>
    </subcellularLocation>
</comment>
<comment type="alternative products">
    <event type="alternative splicing"/>
    <isoform>
        <id>Q10937-1</id>
        <name>a</name>
        <sequence type="displayed"/>
    </isoform>
    <isoform>
        <id>Q10937-2</id>
        <name>b</name>
        <sequence type="described" ref="VSP_032730 VSP_032731"/>
    </isoform>
</comment>
<protein>
    <recommendedName>
        <fullName>Uncharacterized protein B0310.1</fullName>
    </recommendedName>
</protein>